<proteinExistence type="evidence at protein level"/>
<evidence type="ECO:0000269" key="1">
    <source>
    </source>
</evidence>
<evidence type="ECO:0000305" key="2"/>
<dbReference type="EC" id="1.20.4.3"/>
<dbReference type="EMBL" id="BA000036">
    <property type="protein sequence ID" value="BAB98235.1"/>
    <property type="molecule type" value="Genomic_DNA"/>
</dbReference>
<dbReference type="EMBL" id="BX927150">
    <property type="protein sequence ID" value="CAF19548.1"/>
    <property type="molecule type" value="Genomic_DNA"/>
</dbReference>
<dbReference type="RefSeq" id="NP_600071.1">
    <property type="nucleotide sequence ID" value="NC_003450.3"/>
</dbReference>
<dbReference type="RefSeq" id="WP_011013923.1">
    <property type="nucleotide sequence ID" value="NC_006958.1"/>
</dbReference>
<dbReference type="SMR" id="P0DKS9"/>
<dbReference type="STRING" id="196627.cg0964"/>
<dbReference type="KEGG" id="cgb:cg0964"/>
<dbReference type="KEGG" id="cgl:Cgl0842"/>
<dbReference type="PATRIC" id="fig|196627.13.peg.826"/>
<dbReference type="eggNOG" id="COG0695">
    <property type="taxonomic scope" value="Bacteria"/>
</dbReference>
<dbReference type="HOGENOM" id="CLU_026126_11_1_11"/>
<dbReference type="OrthoDB" id="8991911at2"/>
<dbReference type="BioCyc" id="CORYNE:G18NG-10412-MONOMER"/>
<dbReference type="BioCyc" id="MetaCyc:G18NG-10412-MONOMER"/>
<dbReference type="Proteomes" id="UP000000582">
    <property type="component" value="Chromosome"/>
</dbReference>
<dbReference type="Proteomes" id="UP000001009">
    <property type="component" value="Chromosome"/>
</dbReference>
<dbReference type="GO" id="GO:0005737">
    <property type="term" value="C:cytoplasm"/>
    <property type="evidence" value="ECO:0007669"/>
    <property type="project" value="UniProtKB-SubCell"/>
</dbReference>
<dbReference type="GO" id="GO:0016491">
    <property type="term" value="F:oxidoreductase activity"/>
    <property type="evidence" value="ECO:0007669"/>
    <property type="project" value="UniProtKB-KW"/>
</dbReference>
<dbReference type="GO" id="GO:0046685">
    <property type="term" value="P:response to arsenic-containing substance"/>
    <property type="evidence" value="ECO:0007669"/>
    <property type="project" value="UniProtKB-KW"/>
</dbReference>
<dbReference type="CDD" id="cd02976">
    <property type="entry name" value="NrdH"/>
    <property type="match status" value="1"/>
</dbReference>
<dbReference type="Gene3D" id="3.40.30.10">
    <property type="entry name" value="Glutaredoxin"/>
    <property type="match status" value="1"/>
</dbReference>
<dbReference type="InterPro" id="IPR011915">
    <property type="entry name" value="GlrX_actino"/>
</dbReference>
<dbReference type="InterPro" id="IPR002109">
    <property type="entry name" value="Glutaredoxin"/>
</dbReference>
<dbReference type="InterPro" id="IPR036249">
    <property type="entry name" value="Thioredoxin-like_sf"/>
</dbReference>
<dbReference type="NCBIfam" id="TIGR02200">
    <property type="entry name" value="GlrX_actino"/>
    <property type="match status" value="1"/>
</dbReference>
<dbReference type="Pfam" id="PF00462">
    <property type="entry name" value="Glutaredoxin"/>
    <property type="match status" value="1"/>
</dbReference>
<dbReference type="SUPFAM" id="SSF52833">
    <property type="entry name" value="Thioredoxin-like"/>
    <property type="match status" value="1"/>
</dbReference>
<name>MRX1_CORGL</name>
<comment type="function">
    <text evidence="1">Involved in defense against toxic arsenate. Involved in the mycothiol/myoredoxin redox pathway which uses a mycothioltransferase mechanism; functions as a monothiol mixed disulfide reductase and is recycled by a second mycothiol forming mycothione which in turn is reduced in a NADPH-dependent manner.</text>
</comment>
<comment type="catalytic activity">
    <reaction evidence="1">
        <text>[mycoredoxin]-L-cysteine + arseno-mycothiol + H(+) = [mycoredoxin]-S-mycothiol-L-cysteine + arsenite</text>
        <dbReference type="Rhea" id="RHEA:54036"/>
        <dbReference type="Rhea" id="RHEA-COMP:13766"/>
        <dbReference type="Rhea" id="RHEA-COMP:13767"/>
        <dbReference type="ChEBI" id="CHEBI:15378"/>
        <dbReference type="ChEBI" id="CHEBI:29242"/>
        <dbReference type="ChEBI" id="CHEBI:29950"/>
        <dbReference type="ChEBI" id="CHEBI:59655"/>
        <dbReference type="ChEBI" id="CHEBI:138035"/>
        <dbReference type="EC" id="1.20.4.3"/>
    </reaction>
</comment>
<comment type="subcellular location">
    <subcellularLocation>
        <location evidence="2">Cytoplasm</location>
    </subcellularLocation>
</comment>
<comment type="similarity">
    <text evidence="2">Belongs to the glutaredoxin family.</text>
</comment>
<reference key="1">
    <citation type="journal article" date="2003" name="Appl. Microbiol. Biotechnol.">
        <title>The Corynebacterium glutamicum genome: features and impacts on biotechnological processes.</title>
        <authorList>
            <person name="Ikeda M."/>
            <person name="Nakagawa S."/>
        </authorList>
    </citation>
    <scope>NUCLEOTIDE SEQUENCE [LARGE SCALE GENOMIC DNA]</scope>
    <source>
        <strain>ATCC 13032 / DSM 20300 / JCM 1318 / BCRC 11384 / CCUG 27702 / LMG 3730 / NBRC 12168 / NCIMB 10025 / NRRL B-2784 / 534</strain>
    </source>
</reference>
<reference key="2">
    <citation type="journal article" date="2003" name="J. Biotechnol.">
        <title>The complete Corynebacterium glutamicum ATCC 13032 genome sequence and its impact on the production of L-aspartate-derived amino acids and vitamins.</title>
        <authorList>
            <person name="Kalinowski J."/>
            <person name="Bathe B."/>
            <person name="Bartels D."/>
            <person name="Bischoff N."/>
            <person name="Bott M."/>
            <person name="Burkovski A."/>
            <person name="Dusch N."/>
            <person name="Eggeling L."/>
            <person name="Eikmanns B.J."/>
            <person name="Gaigalat L."/>
            <person name="Goesmann A."/>
            <person name="Hartmann M."/>
            <person name="Huthmacher K."/>
            <person name="Kraemer R."/>
            <person name="Linke B."/>
            <person name="McHardy A.C."/>
            <person name="Meyer F."/>
            <person name="Moeckel B."/>
            <person name="Pfefferle W."/>
            <person name="Puehler A."/>
            <person name="Rey D.A."/>
            <person name="Rueckert C."/>
            <person name="Rupp O."/>
            <person name="Sahm H."/>
            <person name="Wendisch V.F."/>
            <person name="Wiegraebe I."/>
            <person name="Tauch A."/>
        </authorList>
    </citation>
    <scope>NUCLEOTIDE SEQUENCE [LARGE SCALE GENOMIC DNA]</scope>
    <source>
        <strain>ATCC 13032 / DSM 20300 / JCM 1318 / BCRC 11384 / CCUG 27702 / LMG 3730 / NBRC 12168 / NCIMB 10025 / NRRL B-2784 / 534</strain>
    </source>
</reference>
<reference key="3">
    <citation type="journal article" date="2009" name="J. Biol. Chem.">
        <title>Arsenate reductase, mycothiol, and mycoredoxin concert thiol/disulfide exchange.</title>
        <authorList>
            <person name="Ordonez E."/>
            <person name="Van Belle K."/>
            <person name="Roos G."/>
            <person name="De Galan S."/>
            <person name="Letek M."/>
            <person name="Gil J.A."/>
            <person name="Wyns L."/>
            <person name="Mateos L.M."/>
            <person name="Messens J."/>
        </authorList>
    </citation>
    <scope>FUNCTION</scope>
    <scope>CATALYTIC ACTIVITY</scope>
    <scope>MUTAGENESIS OF CYS-12 AND CYS-15</scope>
</reference>
<protein>
    <recommendedName>
        <fullName>Mycoredoxin 1</fullName>
        <ecNumber>1.20.4.3</ecNumber>
    </recommendedName>
</protein>
<accession>P0DKS9</accession>
<accession>Q6M6U4</accession>
<accession>Q8NS40</accession>
<feature type="chain" id="PRO_0000418726" description="Mycoredoxin 1">
    <location>
        <begin position="1"/>
        <end position="79"/>
    </location>
</feature>
<feature type="domain" description="Glutaredoxin">
    <location>
        <begin position="1"/>
        <end position="79"/>
    </location>
</feature>
<feature type="mutagenesis site" description="Abolishes activity." evidence="1">
    <original>C</original>
    <variation>A</variation>
    <location>
        <position position="12"/>
    </location>
</feature>
<feature type="mutagenesis site" description="No effect on activity." evidence="1">
    <original>C</original>
    <variation>A</variation>
    <location>
        <position position="15"/>
    </location>
</feature>
<gene>
    <name type="primary">mrx1</name>
    <name type="ordered locus">cg0964</name>
    <name type="ordered locus">Cgl0842</name>
</gene>
<keyword id="KW-0059">Arsenical resistance</keyword>
<keyword id="KW-0963">Cytoplasm</keyword>
<keyword id="KW-0560">Oxidoreductase</keyword>
<keyword id="KW-1185">Reference proteome</keyword>
<organism>
    <name type="scientific">Corynebacterium glutamicum (strain ATCC 13032 / DSM 20300 / JCM 1318 / BCRC 11384 / CCUG 27702 / LMG 3730 / NBRC 12168 / NCIMB 10025 / NRRL B-2784 / 534)</name>
    <dbReference type="NCBI Taxonomy" id="196627"/>
    <lineage>
        <taxon>Bacteria</taxon>
        <taxon>Bacillati</taxon>
        <taxon>Actinomycetota</taxon>
        <taxon>Actinomycetes</taxon>
        <taxon>Mycobacteriales</taxon>
        <taxon>Corynebacteriaceae</taxon>
        <taxon>Corynebacterium</taxon>
    </lineage>
</organism>
<sequence>MSNVTIYATDWCPYCRSLLKGLDGQEYDLIDVDQDEEAGEWVKSVNDGNRIVPTVRYSDGTHATNPLAAEVIAKIEALA</sequence>